<comment type="function">
    <text evidence="1">Part of a membrane-bound complex that couples electron transfer with translocation of ions across the membrane. Required to maintain the reduced state of SoxR.</text>
</comment>
<comment type="cofactor">
    <cofactor evidence="1">
        <name>[4Fe-4S] cluster</name>
        <dbReference type="ChEBI" id="CHEBI:49883"/>
    </cofactor>
    <text evidence="1">Binds 3 [4Fe-4S] clusters.</text>
</comment>
<comment type="subunit">
    <text evidence="1">The complex is composed of six subunits: RsxA, RsxB, RsxC, RsxD, RsxE and RsxG.</text>
</comment>
<comment type="subcellular location">
    <subcellularLocation>
        <location evidence="1">Cell inner membrane</location>
    </subcellularLocation>
</comment>
<comment type="similarity">
    <text evidence="1">Belongs to the 4Fe4S bacterial-type ferredoxin family. RnfB subfamily.</text>
</comment>
<protein>
    <recommendedName>
        <fullName evidence="1">Ion-translocating oxidoreductase complex subunit B</fullName>
        <ecNumber evidence="1">7.-.-.-</ecNumber>
    </recommendedName>
    <alternativeName>
        <fullName evidence="1">Rsx electron transport complex subunit B</fullName>
    </alternativeName>
</protein>
<evidence type="ECO:0000255" key="1">
    <source>
        <dbReference type="HAMAP-Rule" id="MF_00463"/>
    </source>
</evidence>
<accession>A9MRW7</accession>
<sequence length="192" mass="20716">MNTIWIAVGALTFLGLVFGAILGYASRRFAVEDDPVVEKIDAILPQSQCGQCGYPGCRPYAEAVGLQGEKINRCAPGGEAVMLKIADLLNVEPQPCDAEEQQAAPVRMLAVIDENHCIGCTKCIQACPVDAIVGATRAMHTVMSDLCTGCNLCVDPCPTHCIELRPVNETPDSWKWDLNTIPVRIIPVEQHA</sequence>
<reference key="1">
    <citation type="submission" date="2007-11" db="EMBL/GenBank/DDBJ databases">
        <authorList>
            <consortium name="The Salmonella enterica serovar Arizonae Genome Sequencing Project"/>
            <person name="McClelland M."/>
            <person name="Sanderson E.K."/>
            <person name="Porwollik S."/>
            <person name="Spieth J."/>
            <person name="Clifton W.S."/>
            <person name="Fulton R."/>
            <person name="Chunyan W."/>
            <person name="Wollam A."/>
            <person name="Shah N."/>
            <person name="Pepin K."/>
            <person name="Bhonagiri V."/>
            <person name="Nash W."/>
            <person name="Johnson M."/>
            <person name="Thiruvilangam P."/>
            <person name="Wilson R."/>
        </authorList>
    </citation>
    <scope>NUCLEOTIDE SEQUENCE [LARGE SCALE GENOMIC DNA]</scope>
    <source>
        <strain>ATCC BAA-731 / CDC346-86 / RSK2980</strain>
    </source>
</reference>
<name>RSXB_SALAR</name>
<organism>
    <name type="scientific">Salmonella arizonae (strain ATCC BAA-731 / CDC346-86 / RSK2980)</name>
    <dbReference type="NCBI Taxonomy" id="41514"/>
    <lineage>
        <taxon>Bacteria</taxon>
        <taxon>Pseudomonadati</taxon>
        <taxon>Pseudomonadota</taxon>
        <taxon>Gammaproteobacteria</taxon>
        <taxon>Enterobacterales</taxon>
        <taxon>Enterobacteriaceae</taxon>
        <taxon>Salmonella</taxon>
    </lineage>
</organism>
<proteinExistence type="inferred from homology"/>
<keyword id="KW-0004">4Fe-4S</keyword>
<keyword id="KW-0997">Cell inner membrane</keyword>
<keyword id="KW-1003">Cell membrane</keyword>
<keyword id="KW-0249">Electron transport</keyword>
<keyword id="KW-0408">Iron</keyword>
<keyword id="KW-0411">Iron-sulfur</keyword>
<keyword id="KW-0472">Membrane</keyword>
<keyword id="KW-0479">Metal-binding</keyword>
<keyword id="KW-1185">Reference proteome</keyword>
<keyword id="KW-0677">Repeat</keyword>
<keyword id="KW-1278">Translocase</keyword>
<keyword id="KW-0813">Transport</keyword>
<gene>
    <name evidence="1" type="primary">rsxB</name>
    <name type="ordered locus">SARI_01523</name>
</gene>
<feature type="chain" id="PRO_1000081164" description="Ion-translocating oxidoreductase complex subunit B">
    <location>
        <begin position="1"/>
        <end position="192"/>
    </location>
</feature>
<feature type="domain" description="4Fe-4S" evidence="1">
    <location>
        <begin position="32"/>
        <end position="91"/>
    </location>
</feature>
<feature type="domain" description="4Fe-4S ferredoxin-type 1" evidence="1">
    <location>
        <begin position="108"/>
        <end position="137"/>
    </location>
</feature>
<feature type="domain" description="4Fe-4S ferredoxin-type 2" evidence="1">
    <location>
        <begin position="138"/>
        <end position="167"/>
    </location>
</feature>
<feature type="region of interest" description="Hydrophobic" evidence="1">
    <location>
        <begin position="1"/>
        <end position="26"/>
    </location>
</feature>
<feature type="binding site" evidence="1">
    <location>
        <position position="49"/>
    </location>
    <ligand>
        <name>[4Fe-4S] cluster</name>
        <dbReference type="ChEBI" id="CHEBI:49883"/>
        <label>1</label>
    </ligand>
</feature>
<feature type="binding site" evidence="1">
    <location>
        <position position="52"/>
    </location>
    <ligand>
        <name>[4Fe-4S] cluster</name>
        <dbReference type="ChEBI" id="CHEBI:49883"/>
        <label>1</label>
    </ligand>
</feature>
<feature type="binding site" evidence="1">
    <location>
        <position position="57"/>
    </location>
    <ligand>
        <name>[4Fe-4S] cluster</name>
        <dbReference type="ChEBI" id="CHEBI:49883"/>
        <label>1</label>
    </ligand>
</feature>
<feature type="binding site" evidence="1">
    <location>
        <position position="74"/>
    </location>
    <ligand>
        <name>[4Fe-4S] cluster</name>
        <dbReference type="ChEBI" id="CHEBI:49883"/>
        <label>1</label>
    </ligand>
</feature>
<feature type="binding site" evidence="1">
    <location>
        <position position="117"/>
    </location>
    <ligand>
        <name>[4Fe-4S] cluster</name>
        <dbReference type="ChEBI" id="CHEBI:49883"/>
        <label>2</label>
    </ligand>
</feature>
<feature type="binding site" evidence="1">
    <location>
        <position position="120"/>
    </location>
    <ligand>
        <name>[4Fe-4S] cluster</name>
        <dbReference type="ChEBI" id="CHEBI:49883"/>
        <label>2</label>
    </ligand>
</feature>
<feature type="binding site" evidence="1">
    <location>
        <position position="123"/>
    </location>
    <ligand>
        <name>[4Fe-4S] cluster</name>
        <dbReference type="ChEBI" id="CHEBI:49883"/>
        <label>2</label>
    </ligand>
</feature>
<feature type="binding site" evidence="1">
    <location>
        <position position="127"/>
    </location>
    <ligand>
        <name>[4Fe-4S] cluster</name>
        <dbReference type="ChEBI" id="CHEBI:49883"/>
        <label>3</label>
    </ligand>
</feature>
<feature type="binding site" evidence="1">
    <location>
        <position position="147"/>
    </location>
    <ligand>
        <name>[4Fe-4S] cluster</name>
        <dbReference type="ChEBI" id="CHEBI:49883"/>
        <label>3</label>
    </ligand>
</feature>
<feature type="binding site" evidence="1">
    <location>
        <position position="150"/>
    </location>
    <ligand>
        <name>[4Fe-4S] cluster</name>
        <dbReference type="ChEBI" id="CHEBI:49883"/>
        <label>3</label>
    </ligand>
</feature>
<feature type="binding site" evidence="1">
    <location>
        <position position="153"/>
    </location>
    <ligand>
        <name>[4Fe-4S] cluster</name>
        <dbReference type="ChEBI" id="CHEBI:49883"/>
        <label>3</label>
    </ligand>
</feature>
<feature type="binding site" evidence="1">
    <location>
        <position position="157"/>
    </location>
    <ligand>
        <name>[4Fe-4S] cluster</name>
        <dbReference type="ChEBI" id="CHEBI:49883"/>
        <label>2</label>
    </ligand>
</feature>
<dbReference type="EC" id="7.-.-.-" evidence="1"/>
<dbReference type="EMBL" id="CP000880">
    <property type="protein sequence ID" value="ABX21419.1"/>
    <property type="molecule type" value="Genomic_DNA"/>
</dbReference>
<dbReference type="STRING" id="41514.SARI_01523"/>
<dbReference type="KEGG" id="ses:SARI_01523"/>
<dbReference type="HOGENOM" id="CLU_063448_2_0_6"/>
<dbReference type="Proteomes" id="UP000002084">
    <property type="component" value="Chromosome"/>
</dbReference>
<dbReference type="GO" id="GO:0005886">
    <property type="term" value="C:plasma membrane"/>
    <property type="evidence" value="ECO:0007669"/>
    <property type="project" value="UniProtKB-SubCell"/>
</dbReference>
<dbReference type="GO" id="GO:0051539">
    <property type="term" value="F:4 iron, 4 sulfur cluster binding"/>
    <property type="evidence" value="ECO:0007669"/>
    <property type="project" value="UniProtKB-UniRule"/>
</dbReference>
<dbReference type="GO" id="GO:0009055">
    <property type="term" value="F:electron transfer activity"/>
    <property type="evidence" value="ECO:0007669"/>
    <property type="project" value="InterPro"/>
</dbReference>
<dbReference type="GO" id="GO:0046872">
    <property type="term" value="F:metal ion binding"/>
    <property type="evidence" value="ECO:0007669"/>
    <property type="project" value="UniProtKB-KW"/>
</dbReference>
<dbReference type="GO" id="GO:0022900">
    <property type="term" value="P:electron transport chain"/>
    <property type="evidence" value="ECO:0007669"/>
    <property type="project" value="UniProtKB-UniRule"/>
</dbReference>
<dbReference type="FunFam" id="1.10.15.40:FF:000001">
    <property type="entry name" value="Ion-translocating oxidoreductase complex subunit B"/>
    <property type="match status" value="1"/>
</dbReference>
<dbReference type="Gene3D" id="3.30.70.20">
    <property type="match status" value="1"/>
</dbReference>
<dbReference type="Gene3D" id="1.10.15.40">
    <property type="entry name" value="Electron transport complex subunit B, putative Fe-S cluster"/>
    <property type="match status" value="1"/>
</dbReference>
<dbReference type="HAMAP" id="MF_00463">
    <property type="entry name" value="RsxB_RnfB"/>
    <property type="match status" value="1"/>
</dbReference>
<dbReference type="InterPro" id="IPR007202">
    <property type="entry name" value="4Fe-4S_dom"/>
</dbReference>
<dbReference type="InterPro" id="IPR017896">
    <property type="entry name" value="4Fe4S_Fe-S-bd"/>
</dbReference>
<dbReference type="InterPro" id="IPR017900">
    <property type="entry name" value="4Fe4S_Fe_S_CS"/>
</dbReference>
<dbReference type="InterPro" id="IPR050395">
    <property type="entry name" value="4Fe4S_Ferredoxin_RnfB"/>
</dbReference>
<dbReference type="InterPro" id="IPR010207">
    <property type="entry name" value="Elect_transpt_cplx_RnfB/RsxB"/>
</dbReference>
<dbReference type="InterPro" id="IPR016463">
    <property type="entry name" value="RnfB/RsxB_Proteobac"/>
</dbReference>
<dbReference type="NCBIfam" id="NF003475">
    <property type="entry name" value="PRK05113.1"/>
    <property type="match status" value="1"/>
</dbReference>
<dbReference type="NCBIfam" id="TIGR01944">
    <property type="entry name" value="rnfB"/>
    <property type="match status" value="1"/>
</dbReference>
<dbReference type="PANTHER" id="PTHR43560">
    <property type="entry name" value="ION-TRANSLOCATING OXIDOREDUCTASE COMPLEX SUBUNIT B"/>
    <property type="match status" value="1"/>
</dbReference>
<dbReference type="PANTHER" id="PTHR43560:SF1">
    <property type="entry name" value="ION-TRANSLOCATING OXIDOREDUCTASE COMPLEX SUBUNIT B"/>
    <property type="match status" value="1"/>
</dbReference>
<dbReference type="Pfam" id="PF14697">
    <property type="entry name" value="Fer4_21"/>
    <property type="match status" value="1"/>
</dbReference>
<dbReference type="Pfam" id="PF04060">
    <property type="entry name" value="FeS"/>
    <property type="match status" value="1"/>
</dbReference>
<dbReference type="PIRSF" id="PIRSF005784">
    <property type="entry name" value="Elect_transpt_RnfB"/>
    <property type="match status" value="1"/>
</dbReference>
<dbReference type="SUPFAM" id="SSF54862">
    <property type="entry name" value="4Fe-4S ferredoxins"/>
    <property type="match status" value="1"/>
</dbReference>
<dbReference type="PROSITE" id="PS51656">
    <property type="entry name" value="4FE4S"/>
    <property type="match status" value="1"/>
</dbReference>
<dbReference type="PROSITE" id="PS00198">
    <property type="entry name" value="4FE4S_FER_1"/>
    <property type="match status" value="2"/>
</dbReference>
<dbReference type="PROSITE" id="PS51379">
    <property type="entry name" value="4FE4S_FER_2"/>
    <property type="match status" value="2"/>
</dbReference>